<comment type="function">
    <text evidence="1">Catalyzes the formation of a hydroxyacyl-CoA by addition of water on enoyl-CoA. Also exhibits 3-hydroxyacyl-CoA epimerase and 3-hydroxyacyl-CoA dehydrogenase activities.</text>
</comment>
<comment type="catalytic activity">
    <reaction evidence="1">
        <text>a (3S)-3-hydroxyacyl-CoA = a (2E)-enoyl-CoA + H2O</text>
        <dbReference type="Rhea" id="RHEA:16105"/>
        <dbReference type="ChEBI" id="CHEBI:15377"/>
        <dbReference type="ChEBI" id="CHEBI:57318"/>
        <dbReference type="ChEBI" id="CHEBI:58856"/>
        <dbReference type="EC" id="4.2.1.17"/>
    </reaction>
</comment>
<comment type="catalytic activity">
    <reaction evidence="1">
        <text>a 4-saturated-(3S)-3-hydroxyacyl-CoA = a (3E)-enoyl-CoA + H2O</text>
        <dbReference type="Rhea" id="RHEA:20724"/>
        <dbReference type="ChEBI" id="CHEBI:15377"/>
        <dbReference type="ChEBI" id="CHEBI:58521"/>
        <dbReference type="ChEBI" id="CHEBI:137480"/>
        <dbReference type="EC" id="4.2.1.17"/>
    </reaction>
</comment>
<comment type="catalytic activity">
    <reaction evidence="1">
        <text>a (3S)-3-hydroxyacyl-CoA + NAD(+) = a 3-oxoacyl-CoA + NADH + H(+)</text>
        <dbReference type="Rhea" id="RHEA:22432"/>
        <dbReference type="ChEBI" id="CHEBI:15378"/>
        <dbReference type="ChEBI" id="CHEBI:57318"/>
        <dbReference type="ChEBI" id="CHEBI:57540"/>
        <dbReference type="ChEBI" id="CHEBI:57945"/>
        <dbReference type="ChEBI" id="CHEBI:90726"/>
        <dbReference type="EC" id="1.1.1.35"/>
    </reaction>
</comment>
<comment type="catalytic activity">
    <reaction evidence="1">
        <text>(3S)-3-hydroxybutanoyl-CoA = (3R)-3-hydroxybutanoyl-CoA</text>
        <dbReference type="Rhea" id="RHEA:21760"/>
        <dbReference type="ChEBI" id="CHEBI:57315"/>
        <dbReference type="ChEBI" id="CHEBI:57316"/>
        <dbReference type="EC" id="5.1.2.3"/>
    </reaction>
</comment>
<comment type="pathway">
    <text evidence="1">Lipid metabolism; fatty acid beta-oxidation.</text>
</comment>
<comment type="subunit">
    <text evidence="1">Heterotetramer of two alpha chains (FadJ) and two beta chains (FadI).</text>
</comment>
<comment type="subcellular location">
    <subcellularLocation>
        <location evidence="1">Cytoplasm</location>
    </subcellularLocation>
</comment>
<comment type="similarity">
    <text evidence="1">In the N-terminal section; belongs to the enoyl-CoA hydratase/isomerase family.</text>
</comment>
<comment type="similarity">
    <text evidence="1">In the central section; belongs to the 3-hydroxyacyl-CoA dehydrogenase family.</text>
</comment>
<keyword id="KW-0963">Cytoplasm</keyword>
<keyword id="KW-0276">Fatty acid metabolism</keyword>
<keyword id="KW-0413">Isomerase</keyword>
<keyword id="KW-0442">Lipid degradation</keyword>
<keyword id="KW-0443">Lipid metabolism</keyword>
<keyword id="KW-0456">Lyase</keyword>
<keyword id="KW-0511">Multifunctional enzyme</keyword>
<keyword id="KW-0520">NAD</keyword>
<keyword id="KW-0560">Oxidoreductase</keyword>
<dbReference type="EC" id="4.2.1.17" evidence="1"/>
<dbReference type="EC" id="5.1.2.3" evidence="1"/>
<dbReference type="EC" id="1.1.1.35" evidence="1"/>
<dbReference type="EMBL" id="AE017220">
    <property type="protein sequence ID" value="AAX66296.1"/>
    <property type="molecule type" value="Genomic_DNA"/>
</dbReference>
<dbReference type="RefSeq" id="WP_001540547.1">
    <property type="nucleotide sequence ID" value="NC_006905.1"/>
</dbReference>
<dbReference type="SMR" id="Q57LW6"/>
<dbReference type="KEGG" id="sec:SCH_2390"/>
<dbReference type="HOGENOM" id="CLU_009834_16_3_6"/>
<dbReference type="UniPathway" id="UPA00659"/>
<dbReference type="Proteomes" id="UP000000538">
    <property type="component" value="Chromosome"/>
</dbReference>
<dbReference type="GO" id="GO:0005737">
    <property type="term" value="C:cytoplasm"/>
    <property type="evidence" value="ECO:0007669"/>
    <property type="project" value="UniProtKB-SubCell"/>
</dbReference>
<dbReference type="GO" id="GO:0008692">
    <property type="term" value="F:3-hydroxybutyryl-CoA epimerase activity"/>
    <property type="evidence" value="ECO:0007669"/>
    <property type="project" value="UniProtKB-UniRule"/>
</dbReference>
<dbReference type="GO" id="GO:0004300">
    <property type="term" value="F:enoyl-CoA hydratase activity"/>
    <property type="evidence" value="ECO:0007669"/>
    <property type="project" value="UniProtKB-UniRule"/>
</dbReference>
<dbReference type="GO" id="GO:0016509">
    <property type="term" value="F:long-chain-3-hydroxyacyl-CoA dehydrogenase activity"/>
    <property type="evidence" value="ECO:0007669"/>
    <property type="project" value="TreeGrafter"/>
</dbReference>
<dbReference type="GO" id="GO:0070403">
    <property type="term" value="F:NAD+ binding"/>
    <property type="evidence" value="ECO:0007669"/>
    <property type="project" value="InterPro"/>
</dbReference>
<dbReference type="GO" id="GO:0006635">
    <property type="term" value="P:fatty acid beta-oxidation"/>
    <property type="evidence" value="ECO:0007669"/>
    <property type="project" value="UniProtKB-UniRule"/>
</dbReference>
<dbReference type="CDD" id="cd06558">
    <property type="entry name" value="crotonase-like"/>
    <property type="match status" value="1"/>
</dbReference>
<dbReference type="FunFam" id="1.10.1040.50:FF:000003">
    <property type="entry name" value="Fatty acid oxidation complex subunit alpha"/>
    <property type="match status" value="1"/>
</dbReference>
<dbReference type="FunFam" id="3.90.226.10:FF:000011">
    <property type="entry name" value="Fatty acid oxidation complex subunit alpha"/>
    <property type="match status" value="1"/>
</dbReference>
<dbReference type="FunFam" id="3.40.50.720:FF:000009">
    <property type="entry name" value="Fatty oxidation complex, alpha subunit"/>
    <property type="match status" value="1"/>
</dbReference>
<dbReference type="Gene3D" id="1.10.1040.50">
    <property type="match status" value="1"/>
</dbReference>
<dbReference type="Gene3D" id="3.90.226.10">
    <property type="entry name" value="2-enoyl-CoA Hydratase, Chain A, domain 1"/>
    <property type="match status" value="1"/>
</dbReference>
<dbReference type="Gene3D" id="3.40.50.720">
    <property type="entry name" value="NAD(P)-binding Rossmann-like Domain"/>
    <property type="match status" value="1"/>
</dbReference>
<dbReference type="HAMAP" id="MF_01617">
    <property type="entry name" value="FadJ"/>
    <property type="match status" value="1"/>
</dbReference>
<dbReference type="InterPro" id="IPR006180">
    <property type="entry name" value="3-OHacyl-CoA_DH_CS"/>
</dbReference>
<dbReference type="InterPro" id="IPR006176">
    <property type="entry name" value="3-OHacyl-CoA_DH_NAD-bd"/>
</dbReference>
<dbReference type="InterPro" id="IPR006108">
    <property type="entry name" value="3HC_DH_C"/>
</dbReference>
<dbReference type="InterPro" id="IPR008927">
    <property type="entry name" value="6-PGluconate_DH-like_C_sf"/>
</dbReference>
<dbReference type="InterPro" id="IPR029045">
    <property type="entry name" value="ClpP/crotonase-like_dom_sf"/>
</dbReference>
<dbReference type="InterPro" id="IPR001753">
    <property type="entry name" value="Enoyl-CoA_hydra/iso"/>
</dbReference>
<dbReference type="InterPro" id="IPR050136">
    <property type="entry name" value="FA_oxidation_alpha_subunit"/>
</dbReference>
<dbReference type="InterPro" id="IPR012802">
    <property type="entry name" value="FadJ"/>
</dbReference>
<dbReference type="InterPro" id="IPR036291">
    <property type="entry name" value="NAD(P)-bd_dom_sf"/>
</dbReference>
<dbReference type="NCBIfam" id="TIGR02440">
    <property type="entry name" value="FadJ"/>
    <property type="match status" value="1"/>
</dbReference>
<dbReference type="NCBIfam" id="NF008363">
    <property type="entry name" value="PRK11154.1"/>
    <property type="match status" value="1"/>
</dbReference>
<dbReference type="PANTHER" id="PTHR43612">
    <property type="entry name" value="TRIFUNCTIONAL ENZYME SUBUNIT ALPHA"/>
    <property type="match status" value="1"/>
</dbReference>
<dbReference type="PANTHER" id="PTHR43612:SF3">
    <property type="entry name" value="TRIFUNCTIONAL ENZYME SUBUNIT ALPHA, MITOCHONDRIAL"/>
    <property type="match status" value="1"/>
</dbReference>
<dbReference type="Pfam" id="PF00725">
    <property type="entry name" value="3HCDH"/>
    <property type="match status" value="1"/>
</dbReference>
<dbReference type="Pfam" id="PF02737">
    <property type="entry name" value="3HCDH_N"/>
    <property type="match status" value="1"/>
</dbReference>
<dbReference type="Pfam" id="PF00378">
    <property type="entry name" value="ECH_1"/>
    <property type="match status" value="1"/>
</dbReference>
<dbReference type="SUPFAM" id="SSF48179">
    <property type="entry name" value="6-phosphogluconate dehydrogenase C-terminal domain-like"/>
    <property type="match status" value="2"/>
</dbReference>
<dbReference type="SUPFAM" id="SSF52096">
    <property type="entry name" value="ClpP/crotonase"/>
    <property type="match status" value="1"/>
</dbReference>
<dbReference type="SUPFAM" id="SSF51735">
    <property type="entry name" value="NAD(P)-binding Rossmann-fold domains"/>
    <property type="match status" value="1"/>
</dbReference>
<dbReference type="PROSITE" id="PS00067">
    <property type="entry name" value="3HCDH"/>
    <property type="match status" value="1"/>
</dbReference>
<name>FADJ_SALCH</name>
<proteinExistence type="inferred from homology"/>
<feature type="chain" id="PRO_0000109304" description="Fatty acid oxidation complex subunit alpha">
    <location>
        <begin position="1"/>
        <end position="715"/>
    </location>
</feature>
<feature type="region of interest" description="Enoyl-CoA hydratase" evidence="1">
    <location>
        <begin position="1"/>
        <end position="190"/>
    </location>
</feature>
<feature type="region of interest" description="3-hydroxyacyl-CoA dehydrogenase" evidence="1">
    <location>
        <begin position="306"/>
        <end position="714"/>
    </location>
</feature>
<feature type="site" description="Important for catalytic activity" evidence="1">
    <location>
        <position position="118"/>
    </location>
</feature>
<feature type="site" description="Important for catalytic activity" evidence="1">
    <location>
        <position position="140"/>
    </location>
</feature>
<sequence>MTTTSAFMLNVRLDNVAVVAIDVPGEKVNTLKAEFAAQVRAILKQIRENKALQGVVFISAKADNFIAGADINMIGHCQNAQEAETLARQGQQLMAEIQALPVPVIAAIHGACLGGGLEMALACHRRICTDDVKTVLGLPEVQLGLLPGSGGTQRLPRLVGVSTALDMILTGKQLRARQALKAGLVDDVVPQTILLEAAVELAKKERLAQRTLPVRERILAGPLGRALLFRLVRKKTAQKTQGNYPATERIIDVIETGLAQGSSSGYDAEARAFGELAMTPQSQALRAIFFASTKVKKDPGSDAPPGPLNSVGILGGGLMGGGIAWVTACKGGLPVRIKDINTQGINHALKYSWDLLETKVRRRHIKASERDKQLALISGSTDYRGFSHRDLVIEAVFEDLPLKQQMVAEVEQNCAAHTIFASNTSSLPIGDIAANAARPEQVIGLHFFSPVEKMPLVEVIPHASTSAQTIATTVKLAKKQGKTPIVVSDKAGFYVNRILAPYINEAIRMLTEGERVEHIDAALVKFGFPVGPIQLLDEVGIDTGTKIIPVLEAAYGERFSAPANVVASILNDDRKGRKNGRGFYLYGEKGRKSKKQVDPAIYKLIGVQGQSRLSAQQVAERCVMLMLNEAARCFDEKVIRSARDGDIGAVFGIGFPPFLGGPFRYMDALGPGEMVATLQRLAALYGPRYAPCEQLVRMAERREHFWTNGETDQGN</sequence>
<gene>
    <name evidence="1" type="primary">fadJ</name>
    <name type="ordered locus">SCH_2390</name>
</gene>
<evidence type="ECO:0000255" key="1">
    <source>
        <dbReference type="HAMAP-Rule" id="MF_01617"/>
    </source>
</evidence>
<protein>
    <recommendedName>
        <fullName evidence="1">Fatty acid oxidation complex subunit alpha</fullName>
    </recommendedName>
    <domain>
        <recommendedName>
            <fullName evidence="1">Enoyl-CoA hydratase/3-hydroxybutyryl-CoA epimerase</fullName>
            <ecNumber evidence="1">4.2.1.17</ecNumber>
            <ecNumber evidence="1">5.1.2.3</ecNumber>
        </recommendedName>
    </domain>
    <domain>
        <recommendedName>
            <fullName evidence="1">3-hydroxyacyl-CoA dehydrogenase</fullName>
            <ecNumber evidence="1">1.1.1.35</ecNumber>
        </recommendedName>
    </domain>
</protein>
<reference key="1">
    <citation type="journal article" date="2005" name="Nucleic Acids Res.">
        <title>The genome sequence of Salmonella enterica serovar Choleraesuis, a highly invasive and resistant zoonotic pathogen.</title>
        <authorList>
            <person name="Chiu C.-H."/>
            <person name="Tang P."/>
            <person name="Chu C."/>
            <person name="Hu S."/>
            <person name="Bao Q."/>
            <person name="Yu J."/>
            <person name="Chou Y.-Y."/>
            <person name="Wang H.-S."/>
            <person name="Lee Y.-S."/>
        </authorList>
    </citation>
    <scope>NUCLEOTIDE SEQUENCE [LARGE SCALE GENOMIC DNA]</scope>
    <source>
        <strain>SC-B67</strain>
    </source>
</reference>
<organism>
    <name type="scientific">Salmonella choleraesuis (strain SC-B67)</name>
    <dbReference type="NCBI Taxonomy" id="321314"/>
    <lineage>
        <taxon>Bacteria</taxon>
        <taxon>Pseudomonadati</taxon>
        <taxon>Pseudomonadota</taxon>
        <taxon>Gammaproteobacteria</taxon>
        <taxon>Enterobacterales</taxon>
        <taxon>Enterobacteriaceae</taxon>
        <taxon>Salmonella</taxon>
    </lineage>
</organism>
<accession>Q57LW6</accession>